<protein>
    <recommendedName>
        <fullName evidence="1">Small ribosomal subunit protein uS3</fullName>
    </recommendedName>
    <alternativeName>
        <fullName evidence="2">30S ribosomal protein S3</fullName>
    </alternativeName>
</protein>
<reference key="1">
    <citation type="journal article" date="2007" name="Proc. Natl. Acad. Sci. U.S.A.">
        <title>Parallel genomic evolution and metabolic interdependence in an ancient symbiosis.</title>
        <authorList>
            <person name="McCutcheon J.P."/>
            <person name="Moran N.A."/>
        </authorList>
    </citation>
    <scope>NUCLEOTIDE SEQUENCE [LARGE SCALE GENOMIC DNA]</scope>
    <source>
        <strain>GWSS</strain>
    </source>
</reference>
<name>RS3_KARMG</name>
<gene>
    <name evidence="1" type="primary">rpsC</name>
    <name type="ordered locus">SMGWSS_228</name>
</gene>
<organism>
    <name type="scientific">Karelsulcia muelleri (strain GWSS)</name>
    <name type="common">Sulcia muelleri</name>
    <dbReference type="NCBI Taxonomy" id="444179"/>
    <lineage>
        <taxon>Bacteria</taxon>
        <taxon>Pseudomonadati</taxon>
        <taxon>Bacteroidota</taxon>
        <taxon>Flavobacteriia</taxon>
        <taxon>Flavobacteriales</taxon>
        <taxon>Candidatus Karelsulcia</taxon>
    </lineage>
</organism>
<sequence>MGHKVNTLSNRLGLIVGWQSLWYSHYPERIKEDFKIRKYLENRLSKANISRIYIERSLNRVIITISSSRPSIIIGKGGSEIDKLKKELNIFIYKKIQINIFEIKKPELDAVLVSKSIASQLENRGSYKKAIKICISAALQVNAEGIKIKISGRLNGAEMARKETYKEGRIPLSTFRADIDYHMTEAHTNYGIIGIKVWIMKGEIYGKKNLFNIFKLKYKKKKVYSD</sequence>
<evidence type="ECO:0000255" key="1">
    <source>
        <dbReference type="HAMAP-Rule" id="MF_01309"/>
    </source>
</evidence>
<evidence type="ECO:0000305" key="2"/>
<comment type="function">
    <text evidence="1">Binds the lower part of the 30S subunit head. Binds mRNA in the 70S ribosome, positioning it for translation.</text>
</comment>
<comment type="subunit">
    <text evidence="1">Part of the 30S ribosomal subunit. Forms a tight complex with proteins S10 and S14.</text>
</comment>
<comment type="similarity">
    <text evidence="1">Belongs to the universal ribosomal protein uS3 family.</text>
</comment>
<accession>A8Z674</accession>
<feature type="chain" id="PRO_0000323309" description="Small ribosomal subunit protein uS3">
    <location>
        <begin position="1"/>
        <end position="226"/>
    </location>
</feature>
<feature type="domain" description="KH type-2" evidence="1">
    <location>
        <begin position="36"/>
        <end position="104"/>
    </location>
</feature>
<proteinExistence type="inferred from homology"/>
<dbReference type="EMBL" id="CP000770">
    <property type="protein sequence ID" value="ABS30625.1"/>
    <property type="molecule type" value="Genomic_DNA"/>
</dbReference>
<dbReference type="SMR" id="A8Z674"/>
<dbReference type="STRING" id="444179.SMGWSS_228"/>
<dbReference type="KEGG" id="smg:SMGWSS_228"/>
<dbReference type="HOGENOM" id="CLU_058591_0_2_10"/>
<dbReference type="Proteomes" id="UP000000781">
    <property type="component" value="Chromosome"/>
</dbReference>
<dbReference type="GO" id="GO:0022627">
    <property type="term" value="C:cytosolic small ribosomal subunit"/>
    <property type="evidence" value="ECO:0007669"/>
    <property type="project" value="TreeGrafter"/>
</dbReference>
<dbReference type="GO" id="GO:0003729">
    <property type="term" value="F:mRNA binding"/>
    <property type="evidence" value="ECO:0007669"/>
    <property type="project" value="UniProtKB-UniRule"/>
</dbReference>
<dbReference type="GO" id="GO:0019843">
    <property type="term" value="F:rRNA binding"/>
    <property type="evidence" value="ECO:0007669"/>
    <property type="project" value="UniProtKB-UniRule"/>
</dbReference>
<dbReference type="GO" id="GO:0003735">
    <property type="term" value="F:structural constituent of ribosome"/>
    <property type="evidence" value="ECO:0007669"/>
    <property type="project" value="InterPro"/>
</dbReference>
<dbReference type="GO" id="GO:0006412">
    <property type="term" value="P:translation"/>
    <property type="evidence" value="ECO:0007669"/>
    <property type="project" value="UniProtKB-UniRule"/>
</dbReference>
<dbReference type="CDD" id="cd02412">
    <property type="entry name" value="KH-II_30S_S3"/>
    <property type="match status" value="1"/>
</dbReference>
<dbReference type="FunFam" id="3.30.300.20:FF:000001">
    <property type="entry name" value="30S ribosomal protein S3"/>
    <property type="match status" value="1"/>
</dbReference>
<dbReference type="Gene3D" id="3.30.300.20">
    <property type="match status" value="1"/>
</dbReference>
<dbReference type="Gene3D" id="3.30.1140.32">
    <property type="entry name" value="Ribosomal protein S3, C-terminal domain"/>
    <property type="match status" value="1"/>
</dbReference>
<dbReference type="HAMAP" id="MF_01309_B">
    <property type="entry name" value="Ribosomal_uS3_B"/>
    <property type="match status" value="1"/>
</dbReference>
<dbReference type="InterPro" id="IPR004087">
    <property type="entry name" value="KH_dom"/>
</dbReference>
<dbReference type="InterPro" id="IPR015946">
    <property type="entry name" value="KH_dom-like_a/b"/>
</dbReference>
<dbReference type="InterPro" id="IPR004044">
    <property type="entry name" value="KH_dom_type_2"/>
</dbReference>
<dbReference type="InterPro" id="IPR009019">
    <property type="entry name" value="KH_sf_prok-type"/>
</dbReference>
<dbReference type="InterPro" id="IPR036419">
    <property type="entry name" value="Ribosomal_S3_C_sf"/>
</dbReference>
<dbReference type="InterPro" id="IPR005704">
    <property type="entry name" value="Ribosomal_uS3_bac-typ"/>
</dbReference>
<dbReference type="InterPro" id="IPR001351">
    <property type="entry name" value="Ribosomal_uS3_C"/>
</dbReference>
<dbReference type="InterPro" id="IPR018280">
    <property type="entry name" value="Ribosomal_uS3_CS"/>
</dbReference>
<dbReference type="NCBIfam" id="TIGR01009">
    <property type="entry name" value="rpsC_bact"/>
    <property type="match status" value="1"/>
</dbReference>
<dbReference type="PANTHER" id="PTHR11760">
    <property type="entry name" value="30S/40S RIBOSOMAL PROTEIN S3"/>
    <property type="match status" value="1"/>
</dbReference>
<dbReference type="PANTHER" id="PTHR11760:SF19">
    <property type="entry name" value="SMALL RIBOSOMAL SUBUNIT PROTEIN US3C"/>
    <property type="match status" value="1"/>
</dbReference>
<dbReference type="Pfam" id="PF07650">
    <property type="entry name" value="KH_2"/>
    <property type="match status" value="1"/>
</dbReference>
<dbReference type="Pfam" id="PF00189">
    <property type="entry name" value="Ribosomal_S3_C"/>
    <property type="match status" value="1"/>
</dbReference>
<dbReference type="SMART" id="SM00322">
    <property type="entry name" value="KH"/>
    <property type="match status" value="1"/>
</dbReference>
<dbReference type="SUPFAM" id="SSF54814">
    <property type="entry name" value="Prokaryotic type KH domain (KH-domain type II)"/>
    <property type="match status" value="1"/>
</dbReference>
<dbReference type="SUPFAM" id="SSF54821">
    <property type="entry name" value="Ribosomal protein S3 C-terminal domain"/>
    <property type="match status" value="1"/>
</dbReference>
<dbReference type="PROSITE" id="PS50823">
    <property type="entry name" value="KH_TYPE_2"/>
    <property type="match status" value="1"/>
</dbReference>
<dbReference type="PROSITE" id="PS00548">
    <property type="entry name" value="RIBOSOMAL_S3"/>
    <property type="match status" value="1"/>
</dbReference>
<keyword id="KW-0687">Ribonucleoprotein</keyword>
<keyword id="KW-0689">Ribosomal protein</keyword>
<keyword id="KW-0694">RNA-binding</keyword>
<keyword id="KW-0699">rRNA-binding</keyword>